<dbReference type="EMBL" id="AF033321">
    <property type="protein sequence ID" value="AAB87486.1"/>
    <property type="molecule type" value="Genomic_DNA"/>
</dbReference>
<dbReference type="SMR" id="O21948"/>
<dbReference type="GO" id="GO:0003677">
    <property type="term" value="F:DNA binding"/>
    <property type="evidence" value="ECO:0007669"/>
    <property type="project" value="UniProtKB-KW"/>
</dbReference>
<dbReference type="GO" id="GO:0008270">
    <property type="term" value="F:zinc ion binding"/>
    <property type="evidence" value="ECO:0007669"/>
    <property type="project" value="UniProtKB-KW"/>
</dbReference>
<dbReference type="GO" id="GO:0006310">
    <property type="term" value="P:DNA recombination"/>
    <property type="evidence" value="ECO:0007669"/>
    <property type="project" value="UniProtKB-KW"/>
</dbReference>
<dbReference type="GO" id="GO:0006281">
    <property type="term" value="P:DNA repair"/>
    <property type="evidence" value="ECO:0007669"/>
    <property type="project" value="UniProtKB-KW"/>
</dbReference>
<dbReference type="GO" id="GO:0006260">
    <property type="term" value="P:DNA replication"/>
    <property type="evidence" value="ECO:0007669"/>
    <property type="project" value="UniProtKB-KW"/>
</dbReference>
<dbReference type="Gene3D" id="3.90.198.10">
    <property type="entry name" value="Replication Fork Single-Stranded Dna Binding Protein"/>
    <property type="match status" value="1"/>
</dbReference>
<dbReference type="InterPro" id="IPR012340">
    <property type="entry name" value="NA-bd_OB-fold"/>
</dbReference>
<dbReference type="InterPro" id="IPR044947">
    <property type="entry name" value="Phage_T4_Gp32_ssDNA-bd_sf"/>
</dbReference>
<dbReference type="SUPFAM" id="SSF50249">
    <property type="entry name" value="Nucleic acid-binding proteins"/>
    <property type="match status" value="1"/>
</dbReference>
<reference key="1">
    <citation type="submission" date="1997-11" db="EMBL/GenBank/DDBJ databases">
        <authorList>
            <person name="Theimer C.A."/>
            <person name="Krisch H.M."/>
            <person name="Giedroc D.P."/>
        </authorList>
    </citation>
    <scope>NUCLEOTIDE SEQUENCE [GENOMIC DNA]</scope>
</reference>
<comment type="function">
    <text>Binds preferentially to single-stranded DNA and therefore, destabilizes double-stranded DNA. It is involved in DNA replication, repair and recombination. Binds ss-DNA as the replication fork advances and stimulates the replisome processivity and accuracy.</text>
</comment>
<comment type="subunit">
    <text evidence="1">Homodimer in the absence of DNA, monomer when binding DNA.</text>
</comment>
<comment type="miscellaneous">
    <text evidence="1">Interacts with the polymerase and the uvsX and uvsY proteins.</text>
</comment>
<sequence>MFKRKSTAELAAQMAKLNGNKGFSSEDKGEWKLKLDNAGNGQAVIRFL</sequence>
<organismHost>
    <name type="scientific">Selenomonas ruminantium</name>
    <dbReference type="NCBI Taxonomy" id="971"/>
</organismHost>
<keyword id="KW-0227">DNA damage</keyword>
<keyword id="KW-0233">DNA recombination</keyword>
<keyword id="KW-0234">DNA repair</keyword>
<keyword id="KW-0235">DNA replication</keyword>
<keyword id="KW-0238">DNA-binding</keyword>
<keyword id="KW-0479">Metal-binding</keyword>
<keyword id="KW-0862">Zinc</keyword>
<keyword id="KW-0863">Zinc-finger</keyword>
<feature type="chain" id="PRO_0000165051" description="Single-stranded DNA-binding protein">
    <location>
        <begin position="1"/>
        <end position="48" status="greater than"/>
    </location>
</feature>
<feature type="non-terminal residue">
    <location>
        <position position="48"/>
    </location>
</feature>
<accession>O21948</accession>
<proteinExistence type="inferred from homology"/>
<name>VHED_BPM1</name>
<organism>
    <name type="scientific">Enterobacteria phage M1</name>
    <name type="common">Bacteriophage M1</name>
    <dbReference type="NCBI Taxonomy" id="10676"/>
    <lineage>
        <taxon>Viruses</taxon>
        <taxon>Duplodnaviria</taxon>
        <taxon>Heunggongvirae</taxon>
        <taxon>Uroviricota</taxon>
        <taxon>Caudoviricetes</taxon>
        <taxon>Straboviridae</taxon>
        <taxon>Tevenvirinae</taxon>
        <taxon>Tequatrovirus</taxon>
    </lineage>
</organism>
<gene>
    <name type="primary">32</name>
    <name type="synonym">ssb</name>
</gene>
<evidence type="ECO:0000250" key="1"/>
<protein>
    <recommendedName>
        <fullName>Single-stranded DNA-binding protein</fullName>
    </recommendedName>
    <alternativeName>
        <fullName>Gp32</fullName>
    </alternativeName>
    <alternativeName>
        <fullName>Helix-destabilizing protein</fullName>
    </alternativeName>
</protein>